<name>GSTZ1_ARATH</name>
<evidence type="ECO:0000250" key="1"/>
<evidence type="ECO:0000269" key="2">
    <source>
    </source>
</evidence>
<evidence type="ECO:0000303" key="3">
    <source ref="7"/>
</evidence>
<evidence type="ECO:0000305" key="4"/>
<evidence type="ECO:0007829" key="5">
    <source>
        <dbReference type="PDB" id="1E6B"/>
    </source>
</evidence>
<feature type="chain" id="PRO_0000186029" description="Glutathione S-transferase Z1">
    <location>
        <begin position="1"/>
        <end position="221"/>
    </location>
</feature>
<feature type="domain" description="GST N-terminal">
    <location>
        <begin position="7"/>
        <end position="88"/>
    </location>
</feature>
<feature type="domain" description="GST C-terminal">
    <location>
        <begin position="93"/>
        <end position="218"/>
    </location>
</feature>
<feature type="binding site" evidence="1">
    <location>
        <begin position="17"/>
        <end position="22"/>
    </location>
    <ligand>
        <name>glutathione</name>
        <dbReference type="ChEBI" id="CHEBI:57925"/>
    </ligand>
</feature>
<feature type="binding site" evidence="1">
    <location>
        <begin position="17"/>
        <end position="18"/>
    </location>
    <ligand>
        <name>glutathione</name>
        <dbReference type="ChEBI" id="CHEBI:57925"/>
    </ligand>
</feature>
<feature type="binding site" evidence="1">
    <location>
        <begin position="46"/>
        <end position="47"/>
    </location>
    <ligand>
        <name>glutathione</name>
        <dbReference type="ChEBI" id="CHEBI:57925"/>
    </ligand>
</feature>
<feature type="binding site" evidence="1">
    <location>
        <position position="46"/>
    </location>
    <ligand>
        <name>glutathione</name>
        <dbReference type="ChEBI" id="CHEBI:57925"/>
    </ligand>
</feature>
<feature type="binding site" evidence="1">
    <location>
        <begin position="59"/>
        <end position="60"/>
    </location>
    <ligand>
        <name>glutathione</name>
        <dbReference type="ChEBI" id="CHEBI:57925"/>
    </ligand>
</feature>
<feature type="binding site" evidence="1">
    <location>
        <position position="60"/>
    </location>
    <ligand>
        <name>glutathione</name>
        <dbReference type="ChEBI" id="CHEBI:57925"/>
    </ligand>
</feature>
<feature type="binding site" evidence="1">
    <location>
        <begin position="72"/>
        <end position="73"/>
    </location>
    <ligand>
        <name>glutathione</name>
        <dbReference type="ChEBI" id="CHEBI:57925"/>
    </ligand>
</feature>
<feature type="binding site" evidence="1">
    <location>
        <position position="112"/>
    </location>
    <ligand>
        <name>glutathione</name>
        <dbReference type="ChEBI" id="CHEBI:57925"/>
    </ligand>
</feature>
<feature type="binding site" evidence="1">
    <location>
        <begin position="116"/>
        <end position="118"/>
    </location>
    <ligand>
        <name>glutathione</name>
        <dbReference type="ChEBI" id="CHEBI:57925"/>
    </ligand>
</feature>
<feature type="splice variant" id="VSP_041936" description="In isoform 2." evidence="3">
    <original>S</original>
    <variation>SVYRFDLQ</variation>
    <location>
        <position position="49"/>
    </location>
</feature>
<feature type="strand" evidence="5">
    <location>
        <begin position="10"/>
        <end position="13"/>
    </location>
</feature>
<feature type="helix" evidence="5">
    <location>
        <begin position="18"/>
        <end position="29"/>
    </location>
</feature>
<feature type="strand" evidence="5">
    <location>
        <begin position="35"/>
        <end position="38"/>
    </location>
</feature>
<feature type="turn" evidence="5">
    <location>
        <begin position="41"/>
        <end position="44"/>
    </location>
</feature>
<feature type="helix" evidence="5">
    <location>
        <begin position="45"/>
        <end position="47"/>
    </location>
</feature>
<feature type="helix" evidence="5">
    <location>
        <begin position="49"/>
        <end position="54"/>
    </location>
</feature>
<feature type="strand" evidence="5">
    <location>
        <begin position="60"/>
        <end position="65"/>
    </location>
</feature>
<feature type="strand" evidence="5">
    <location>
        <begin position="68"/>
        <end position="72"/>
    </location>
</feature>
<feature type="helix" evidence="5">
    <location>
        <begin position="73"/>
        <end position="83"/>
    </location>
</feature>
<feature type="helix" evidence="5">
    <location>
        <begin position="94"/>
        <end position="109"/>
    </location>
</feature>
<feature type="helix" evidence="5">
    <location>
        <begin position="138"/>
        <end position="151"/>
    </location>
</feature>
<feature type="strand" evidence="5">
    <location>
        <begin position="156"/>
        <end position="158"/>
    </location>
</feature>
<feature type="strand" evidence="5">
    <location>
        <begin position="161"/>
        <end position="163"/>
    </location>
</feature>
<feature type="helix" evidence="5">
    <location>
        <begin position="166"/>
        <end position="182"/>
    </location>
</feature>
<feature type="helix" evidence="5">
    <location>
        <begin position="190"/>
        <end position="199"/>
    </location>
</feature>
<feature type="helix" evidence="5">
    <location>
        <begin position="203"/>
        <end position="208"/>
    </location>
</feature>
<feature type="helix" evidence="5">
    <location>
        <begin position="210"/>
        <end position="212"/>
    </location>
</feature>
<accession>Q9ZVQ3</accession>
<accession>Q0WWK7</accession>
<comment type="function">
    <text evidence="2">Acts a maleylacetone isomerase. Also catalyzes the glutathione-dependent dehalogenation of dichloroacetic acid to glyoxylic acid. In vitro, possesses glutathione peroxidase activity toward cumene hydroperoxide and linoleic acid-13-hydroperoxide.</text>
</comment>
<comment type="catalytic activity">
    <reaction>
        <text>RX + glutathione = an S-substituted glutathione + a halide anion + H(+)</text>
        <dbReference type="Rhea" id="RHEA:16437"/>
        <dbReference type="ChEBI" id="CHEBI:15378"/>
        <dbReference type="ChEBI" id="CHEBI:16042"/>
        <dbReference type="ChEBI" id="CHEBI:17792"/>
        <dbReference type="ChEBI" id="CHEBI:57925"/>
        <dbReference type="ChEBI" id="CHEBI:90779"/>
        <dbReference type="EC" id="2.5.1.18"/>
    </reaction>
</comment>
<comment type="subunit">
    <text>Homodimer.</text>
</comment>
<comment type="subcellular location">
    <subcellularLocation>
        <location evidence="1">Cytoplasm</location>
        <location evidence="1">Cytosol</location>
    </subcellularLocation>
</comment>
<comment type="alternative products">
    <event type="alternative splicing"/>
    <isoform>
        <id>Q9ZVQ3-1</id>
        <name>1</name>
        <sequence type="displayed"/>
    </isoform>
    <isoform>
        <id>Q9ZVQ3-2</id>
        <name>2</name>
        <sequence type="described" ref="VSP_041936"/>
    </isoform>
</comment>
<comment type="induction">
    <text evidence="2">By salicylic acid, methyl jasmonate, auxin, H(2)O(2), and the pathogen Hyaloperonospora parasitica.</text>
</comment>
<comment type="similarity">
    <text evidence="4">Belongs to the GST superfamily. Zeta family.</text>
</comment>
<protein>
    <recommendedName>
        <fullName>Glutathione S-transferase Z1</fullName>
        <shortName>AtGSTZ1</shortName>
        <ecNumber>2.5.1.18</ecNumber>
    </recommendedName>
    <alternativeName>
        <fullName>GST class-zeta member 1</fullName>
    </alternativeName>
    <alternativeName>
        <fullName>Glutathione S-transferase 18</fullName>
    </alternativeName>
    <alternativeName>
        <fullName>Maleylacetone isomerase</fullName>
        <shortName>MAI</shortName>
        <ecNumber>5.2.1.-</ecNumber>
    </alternativeName>
</protein>
<reference key="1">
    <citation type="journal article" date="2002" name="Plant Mol. Biol.">
        <title>Probing the diversity of the Arabidopsis glutathione S-transferase gene family.</title>
        <authorList>
            <person name="Wagner U."/>
            <person name="Edwards R."/>
            <person name="Dixon D.P."/>
            <person name="Mauch F."/>
        </authorList>
    </citation>
    <scope>NUCLEOTIDE SEQUENCE [MRNA]</scope>
    <scope>FUNCTION</scope>
    <scope>INDUCTION</scope>
    <scope>GENE FAMILY</scope>
    <scope>NOMENCLATURE</scope>
    <source>
        <strain>cv. Columbia</strain>
    </source>
</reference>
<reference key="2">
    <citation type="journal article" date="2000" name="Arch. Biochem. Biophys.">
        <title>Characterisation of a zeta class glutathione transferase from Arabidopsis thaliana with a putative role in tyrosine catabolism.</title>
        <authorList>
            <person name="Dixon D.P."/>
            <person name="Cole D.J."/>
            <person name="Edwards R."/>
        </authorList>
    </citation>
    <scope>NUCLEOTIDE SEQUENCE [MRNA]</scope>
    <scope>CHARACTERIZATION</scope>
    <source>
        <strain>cv. Columbia</strain>
    </source>
</reference>
<reference key="3">
    <citation type="submission" date="2002-12" db="EMBL/GenBank/DDBJ databases">
        <title>Arabidopsis thaliana ecotype Columbia for glutathione S-transferase zeta (AtGSTZ) mRNA.</title>
        <authorList>
            <person name="Chen D."/>
            <person name="Kawarasaki Y."/>
            <person name="Nakano H."/>
            <person name="Yamane T."/>
        </authorList>
    </citation>
    <scope>NUCLEOTIDE SEQUENCE [MRNA]</scope>
    <source>
        <strain>cv. Columbia</strain>
    </source>
</reference>
<reference key="4">
    <citation type="journal article" date="1999" name="Nature">
        <title>Sequence and analysis of chromosome 2 of the plant Arabidopsis thaliana.</title>
        <authorList>
            <person name="Lin X."/>
            <person name="Kaul S."/>
            <person name="Rounsley S.D."/>
            <person name="Shea T.P."/>
            <person name="Benito M.-I."/>
            <person name="Town C.D."/>
            <person name="Fujii C.Y."/>
            <person name="Mason T.M."/>
            <person name="Bowman C.L."/>
            <person name="Barnstead M.E."/>
            <person name="Feldblyum T.V."/>
            <person name="Buell C.R."/>
            <person name="Ketchum K.A."/>
            <person name="Lee J.J."/>
            <person name="Ronning C.M."/>
            <person name="Koo H.L."/>
            <person name="Moffat K.S."/>
            <person name="Cronin L.A."/>
            <person name="Shen M."/>
            <person name="Pai G."/>
            <person name="Van Aken S."/>
            <person name="Umayam L."/>
            <person name="Tallon L.J."/>
            <person name="Gill J.E."/>
            <person name="Adams M.D."/>
            <person name="Carrera A.J."/>
            <person name="Creasy T.H."/>
            <person name="Goodman H.M."/>
            <person name="Somerville C.R."/>
            <person name="Copenhaver G.P."/>
            <person name="Preuss D."/>
            <person name="Nierman W.C."/>
            <person name="White O."/>
            <person name="Eisen J.A."/>
            <person name="Salzberg S.L."/>
            <person name="Fraser C.M."/>
            <person name="Venter J.C."/>
        </authorList>
    </citation>
    <scope>NUCLEOTIDE SEQUENCE [LARGE SCALE GENOMIC DNA]</scope>
    <source>
        <strain>cv. Columbia</strain>
    </source>
</reference>
<reference key="5">
    <citation type="journal article" date="2017" name="Plant J.">
        <title>Araport11: a complete reannotation of the Arabidopsis thaliana reference genome.</title>
        <authorList>
            <person name="Cheng C.Y."/>
            <person name="Krishnakumar V."/>
            <person name="Chan A.P."/>
            <person name="Thibaud-Nissen F."/>
            <person name="Schobel S."/>
            <person name="Town C.D."/>
        </authorList>
    </citation>
    <scope>GENOME REANNOTATION</scope>
    <source>
        <strain>cv. Columbia</strain>
    </source>
</reference>
<reference key="6">
    <citation type="journal article" date="2003" name="Science">
        <title>Empirical analysis of transcriptional activity in the Arabidopsis genome.</title>
        <authorList>
            <person name="Yamada K."/>
            <person name="Lim J."/>
            <person name="Dale J.M."/>
            <person name="Chen H."/>
            <person name="Shinn P."/>
            <person name="Palm C.J."/>
            <person name="Southwick A.M."/>
            <person name="Wu H.C."/>
            <person name="Kim C.J."/>
            <person name="Nguyen M."/>
            <person name="Pham P.K."/>
            <person name="Cheuk R.F."/>
            <person name="Karlin-Newmann G."/>
            <person name="Liu S.X."/>
            <person name="Lam B."/>
            <person name="Sakano H."/>
            <person name="Wu T."/>
            <person name="Yu G."/>
            <person name="Miranda M."/>
            <person name="Quach H.L."/>
            <person name="Tripp M."/>
            <person name="Chang C.H."/>
            <person name="Lee J.M."/>
            <person name="Toriumi M.J."/>
            <person name="Chan M.M."/>
            <person name="Tang C.C."/>
            <person name="Onodera C.S."/>
            <person name="Deng J.M."/>
            <person name="Akiyama K."/>
            <person name="Ansari Y."/>
            <person name="Arakawa T."/>
            <person name="Banh J."/>
            <person name="Banno F."/>
            <person name="Bowser L."/>
            <person name="Brooks S.Y."/>
            <person name="Carninci P."/>
            <person name="Chao Q."/>
            <person name="Choy N."/>
            <person name="Enju A."/>
            <person name="Goldsmith A.D."/>
            <person name="Gurjal M."/>
            <person name="Hansen N.F."/>
            <person name="Hayashizaki Y."/>
            <person name="Johnson-Hopson C."/>
            <person name="Hsuan V.W."/>
            <person name="Iida K."/>
            <person name="Karnes M."/>
            <person name="Khan S."/>
            <person name="Koesema E."/>
            <person name="Ishida J."/>
            <person name="Jiang P.X."/>
            <person name="Jones T."/>
            <person name="Kawai J."/>
            <person name="Kamiya A."/>
            <person name="Meyers C."/>
            <person name="Nakajima M."/>
            <person name="Narusaka M."/>
            <person name="Seki M."/>
            <person name="Sakurai T."/>
            <person name="Satou M."/>
            <person name="Tamse R."/>
            <person name="Vaysberg M."/>
            <person name="Wallender E.K."/>
            <person name="Wong C."/>
            <person name="Yamamura Y."/>
            <person name="Yuan S."/>
            <person name="Shinozaki K."/>
            <person name="Davis R.W."/>
            <person name="Theologis A."/>
            <person name="Ecker J.R."/>
        </authorList>
    </citation>
    <scope>NUCLEOTIDE SEQUENCE [LARGE SCALE MRNA]</scope>
    <source>
        <strain>cv. Columbia</strain>
    </source>
</reference>
<reference key="7">
    <citation type="submission" date="2011-04" db="EMBL/GenBank/DDBJ databases">
        <title>Large-scale analysis of RIKEN Arabidopsis full-length (RAFL) cDNAs.</title>
        <authorList>
            <person name="Totoki Y."/>
            <person name="Seki M."/>
            <person name="Ishida J."/>
            <person name="Nakajima M."/>
            <person name="Enju A."/>
            <person name="Kamiya A."/>
            <person name="Narusaka M."/>
            <person name="Shin-i T."/>
            <person name="Nakagawa M."/>
            <person name="Sakamoto N."/>
            <person name="Oishi K."/>
            <person name="Kohara Y."/>
            <person name="Kobayashi M."/>
            <person name="Toyoda A."/>
            <person name="Sakaki Y."/>
            <person name="Sakurai T."/>
            <person name="Iida K."/>
            <person name="Akiyama K."/>
            <person name="Satou M."/>
            <person name="Toyoda T."/>
            <person name="Konagaya A."/>
            <person name="Carninci P."/>
            <person name="Kawai J."/>
            <person name="Hayashizaki Y."/>
            <person name="Shinozaki K."/>
        </authorList>
    </citation>
    <scope>NUCLEOTIDE SEQUENCE [LARGE SCALE MRNA] (ISOFORM 2)</scope>
    <source>
        <strain>cv. Columbia</strain>
    </source>
</reference>
<reference key="8">
    <citation type="journal article" date="2001" name="J. Mol. Biol.">
        <title>The structure of a zeta class glutathione S-transferase from Arabidopsis thaliana: characterisation of a GST with novel active-site architecture and a putative role in tyrosine catabolism.</title>
        <authorList>
            <person name="Thom R."/>
            <person name="Dixon D.P."/>
            <person name="Edwards R."/>
            <person name="Cole D.J."/>
            <person name="Lapthorn A.J."/>
        </authorList>
    </citation>
    <scope>X-RAY CRYSTALLOGRAPHY (1.65 ANGSTROMS)</scope>
</reference>
<proteinExistence type="evidence at protein level"/>
<keyword id="KW-0002">3D-structure</keyword>
<keyword id="KW-0025">Alternative splicing</keyword>
<keyword id="KW-0963">Cytoplasm</keyword>
<keyword id="KW-0216">Detoxification</keyword>
<keyword id="KW-0413">Isomerase</keyword>
<keyword id="KW-0560">Oxidoreductase</keyword>
<keyword id="KW-0575">Peroxidase</keyword>
<keyword id="KW-1185">Reference proteome</keyword>
<keyword id="KW-0346">Stress response</keyword>
<keyword id="KW-0808">Transferase</keyword>
<gene>
    <name type="primary">GSTZ1</name>
    <name type="synonym">GST18</name>
    <name type="synonym">GSTZ</name>
    <name type="ordered locus">At2g02390</name>
    <name type="ORF">T16F16.18</name>
</gene>
<organism>
    <name type="scientific">Arabidopsis thaliana</name>
    <name type="common">Mouse-ear cress</name>
    <dbReference type="NCBI Taxonomy" id="3702"/>
    <lineage>
        <taxon>Eukaryota</taxon>
        <taxon>Viridiplantae</taxon>
        <taxon>Streptophyta</taxon>
        <taxon>Embryophyta</taxon>
        <taxon>Tracheophyta</taxon>
        <taxon>Spermatophyta</taxon>
        <taxon>Magnoliopsida</taxon>
        <taxon>eudicotyledons</taxon>
        <taxon>Gunneridae</taxon>
        <taxon>Pentapetalae</taxon>
        <taxon>rosids</taxon>
        <taxon>malvids</taxon>
        <taxon>Brassicales</taxon>
        <taxon>Brassicaceae</taxon>
        <taxon>Camelineae</taxon>
        <taxon>Arabidopsis</taxon>
    </lineage>
</organism>
<sequence length="221" mass="24888">MANSGEEKLKLYSYWRSSCAHRVRIALALKGLDYEYIPVNLLKGDQFDSDFKKINPMGTVPALVDGDVVINDSFAIIMYLDEKYPEPPLLPRDLHKRAVNYQAMSIVLSGIQPHQNLAVIRYIEEKINVEEKTAWVNNAITKGFTALEKLLVNCAGKHATGDEIYLADLFLAPQIHGAINRFQINMEPYPTLAKCYESYNELPAFQNALPEKQPDAPSSTI</sequence>
<dbReference type="EC" id="2.5.1.18"/>
<dbReference type="EC" id="5.2.1.-"/>
<dbReference type="EMBL" id="AF288182">
    <property type="protein sequence ID" value="AAG30131.1"/>
    <property type="molecule type" value="mRNA"/>
</dbReference>
<dbReference type="EMBL" id="AJ278293">
    <property type="protein sequence ID" value="CAC19475.1"/>
    <property type="molecule type" value="mRNA"/>
</dbReference>
<dbReference type="EMBL" id="AY208155">
    <property type="protein sequence ID" value="AAO60039.1"/>
    <property type="molecule type" value="mRNA"/>
</dbReference>
<dbReference type="EMBL" id="AC005312">
    <property type="protein sequence ID" value="AAC78521.1"/>
    <property type="molecule type" value="Genomic_DNA"/>
</dbReference>
<dbReference type="EMBL" id="CP002685">
    <property type="protein sequence ID" value="AEC05573.1"/>
    <property type="molecule type" value="Genomic_DNA"/>
</dbReference>
<dbReference type="EMBL" id="CP002685">
    <property type="protein sequence ID" value="AEC05575.1"/>
    <property type="molecule type" value="Genomic_DNA"/>
</dbReference>
<dbReference type="EMBL" id="AY052332">
    <property type="protein sequence ID" value="AAK96525.1"/>
    <property type="molecule type" value="mRNA"/>
</dbReference>
<dbReference type="EMBL" id="AY061901">
    <property type="protein sequence ID" value="AAL31228.1"/>
    <property type="molecule type" value="mRNA"/>
</dbReference>
<dbReference type="EMBL" id="AK226342">
    <property type="protein sequence ID" value="BAE98491.1"/>
    <property type="molecule type" value="mRNA"/>
</dbReference>
<dbReference type="PIR" id="B84436">
    <property type="entry name" value="B84436"/>
</dbReference>
<dbReference type="RefSeq" id="NP_178344.1">
    <molecule id="Q9ZVQ3-1"/>
    <property type="nucleotide sequence ID" value="NM_126296.5"/>
</dbReference>
<dbReference type="RefSeq" id="NP_973400.1">
    <molecule id="Q9ZVQ3-2"/>
    <property type="nucleotide sequence ID" value="NM_201671.3"/>
</dbReference>
<dbReference type="PDB" id="1E6B">
    <property type="method" value="X-ray"/>
    <property type="resolution" value="1.65 A"/>
    <property type="chains" value="A=1-221"/>
</dbReference>
<dbReference type="PDBsum" id="1E6B"/>
<dbReference type="SMR" id="Q9ZVQ3"/>
<dbReference type="FunCoup" id="Q9ZVQ3">
    <property type="interactions" value="2030"/>
</dbReference>
<dbReference type="STRING" id="3702.Q9ZVQ3"/>
<dbReference type="PaxDb" id="3702-AT2G02390.3"/>
<dbReference type="ProteomicsDB" id="247331">
    <molecule id="Q9ZVQ3-1"/>
</dbReference>
<dbReference type="EnsemblPlants" id="AT2G02390.1">
    <molecule id="Q9ZVQ3-1"/>
    <property type="protein sequence ID" value="AT2G02390.1"/>
    <property type="gene ID" value="AT2G02390"/>
</dbReference>
<dbReference type="EnsemblPlants" id="AT2G02390.3">
    <molecule id="Q9ZVQ3-2"/>
    <property type="protein sequence ID" value="AT2G02390.3"/>
    <property type="gene ID" value="AT2G02390"/>
</dbReference>
<dbReference type="GeneID" id="814770"/>
<dbReference type="Gramene" id="AT2G02390.1">
    <molecule id="Q9ZVQ3-1"/>
    <property type="protein sequence ID" value="AT2G02390.1"/>
    <property type="gene ID" value="AT2G02390"/>
</dbReference>
<dbReference type="Gramene" id="AT2G02390.3">
    <molecule id="Q9ZVQ3-2"/>
    <property type="protein sequence ID" value="AT2G02390.3"/>
    <property type="gene ID" value="AT2G02390"/>
</dbReference>
<dbReference type="KEGG" id="ath:AT2G02390"/>
<dbReference type="Araport" id="AT2G02390"/>
<dbReference type="TAIR" id="AT2G02390">
    <property type="gene designation" value="GSTZ1"/>
</dbReference>
<dbReference type="eggNOG" id="KOG0868">
    <property type="taxonomic scope" value="Eukaryota"/>
</dbReference>
<dbReference type="HOGENOM" id="CLU_011226_20_1_1"/>
<dbReference type="InParanoid" id="Q9ZVQ3"/>
<dbReference type="OMA" id="VYNAHRF"/>
<dbReference type="OrthoDB" id="4951845at2759"/>
<dbReference type="PhylomeDB" id="Q9ZVQ3"/>
<dbReference type="BioCyc" id="ARA:AT2G02390-MONOMER"/>
<dbReference type="BRENDA" id="5.2.1.2">
    <property type="organism ID" value="399"/>
</dbReference>
<dbReference type="EvolutionaryTrace" id="Q9ZVQ3"/>
<dbReference type="PRO" id="PR:Q9ZVQ3"/>
<dbReference type="Proteomes" id="UP000006548">
    <property type="component" value="Chromosome 2"/>
</dbReference>
<dbReference type="ExpressionAtlas" id="Q9ZVQ3">
    <property type="expression patterns" value="baseline and differential"/>
</dbReference>
<dbReference type="GO" id="GO:0005737">
    <property type="term" value="C:cytoplasm"/>
    <property type="evidence" value="ECO:0000303"/>
    <property type="project" value="TAIR"/>
</dbReference>
<dbReference type="GO" id="GO:0005829">
    <property type="term" value="C:cytosol"/>
    <property type="evidence" value="ECO:0007669"/>
    <property type="project" value="UniProtKB-SubCell"/>
</dbReference>
<dbReference type="GO" id="GO:0004364">
    <property type="term" value="F:glutathione transferase activity"/>
    <property type="evidence" value="ECO:0007669"/>
    <property type="project" value="UniProtKB-EC"/>
</dbReference>
<dbReference type="GO" id="GO:0016034">
    <property type="term" value="F:maleylacetoacetate isomerase activity"/>
    <property type="evidence" value="ECO:0000314"/>
    <property type="project" value="TAIR"/>
</dbReference>
<dbReference type="GO" id="GO:0004601">
    <property type="term" value="F:peroxidase activity"/>
    <property type="evidence" value="ECO:0007669"/>
    <property type="project" value="UniProtKB-KW"/>
</dbReference>
<dbReference type="GO" id="GO:0009072">
    <property type="term" value="P:aromatic amino acid metabolic process"/>
    <property type="evidence" value="ECO:0007669"/>
    <property type="project" value="InterPro"/>
</dbReference>
<dbReference type="GO" id="GO:1902000">
    <property type="term" value="P:homogentisate catabolic process"/>
    <property type="evidence" value="ECO:0000314"/>
    <property type="project" value="TAIR"/>
</dbReference>
<dbReference type="GO" id="GO:0009407">
    <property type="term" value="P:toxin catabolic process"/>
    <property type="evidence" value="ECO:0000304"/>
    <property type="project" value="TAIR"/>
</dbReference>
<dbReference type="CDD" id="cd03191">
    <property type="entry name" value="GST_C_Zeta"/>
    <property type="match status" value="1"/>
</dbReference>
<dbReference type="CDD" id="cd03042">
    <property type="entry name" value="GST_N_Zeta"/>
    <property type="match status" value="1"/>
</dbReference>
<dbReference type="FunFam" id="3.40.30.10:FF:000100">
    <property type="entry name" value="Glutathione S-transferase Z1"/>
    <property type="match status" value="1"/>
</dbReference>
<dbReference type="FunFam" id="1.20.1050.10:FF:000017">
    <property type="entry name" value="Maleylacetoacetate isomerase"/>
    <property type="match status" value="1"/>
</dbReference>
<dbReference type="Gene3D" id="1.20.1050.10">
    <property type="match status" value="1"/>
</dbReference>
<dbReference type="Gene3D" id="3.40.30.10">
    <property type="entry name" value="Glutaredoxin"/>
    <property type="match status" value="1"/>
</dbReference>
<dbReference type="InterPro" id="IPR010987">
    <property type="entry name" value="Glutathione-S-Trfase_C-like"/>
</dbReference>
<dbReference type="InterPro" id="IPR036282">
    <property type="entry name" value="Glutathione-S-Trfase_C_sf"/>
</dbReference>
<dbReference type="InterPro" id="IPR040079">
    <property type="entry name" value="Glutathione_S-Trfase"/>
</dbReference>
<dbReference type="InterPro" id="IPR004045">
    <property type="entry name" value="Glutathione_S-Trfase_N"/>
</dbReference>
<dbReference type="InterPro" id="IPR004046">
    <property type="entry name" value="GST_C"/>
</dbReference>
<dbReference type="InterPro" id="IPR005955">
    <property type="entry name" value="GST_Zeta"/>
</dbReference>
<dbReference type="InterPro" id="IPR034330">
    <property type="entry name" value="GST_Zeta_C"/>
</dbReference>
<dbReference type="InterPro" id="IPR034333">
    <property type="entry name" value="GST_Zeta_N"/>
</dbReference>
<dbReference type="InterPro" id="IPR036249">
    <property type="entry name" value="Thioredoxin-like_sf"/>
</dbReference>
<dbReference type="NCBIfam" id="TIGR01262">
    <property type="entry name" value="maiA"/>
    <property type="match status" value="1"/>
</dbReference>
<dbReference type="PANTHER" id="PTHR42673">
    <property type="entry name" value="MALEYLACETOACETATE ISOMERASE"/>
    <property type="match status" value="1"/>
</dbReference>
<dbReference type="PANTHER" id="PTHR42673:SF4">
    <property type="entry name" value="MALEYLACETOACETATE ISOMERASE"/>
    <property type="match status" value="1"/>
</dbReference>
<dbReference type="Pfam" id="PF14497">
    <property type="entry name" value="GST_C_3"/>
    <property type="match status" value="1"/>
</dbReference>
<dbReference type="Pfam" id="PF13409">
    <property type="entry name" value="GST_N_2"/>
    <property type="match status" value="1"/>
</dbReference>
<dbReference type="SFLD" id="SFLDS00019">
    <property type="entry name" value="Glutathione_Transferase_(cytos"/>
    <property type="match status" value="1"/>
</dbReference>
<dbReference type="SFLD" id="SFLDG00358">
    <property type="entry name" value="Main_(cytGST)"/>
    <property type="match status" value="1"/>
</dbReference>
<dbReference type="SUPFAM" id="SSF47616">
    <property type="entry name" value="GST C-terminal domain-like"/>
    <property type="match status" value="1"/>
</dbReference>
<dbReference type="SUPFAM" id="SSF52833">
    <property type="entry name" value="Thioredoxin-like"/>
    <property type="match status" value="1"/>
</dbReference>
<dbReference type="PROSITE" id="PS50405">
    <property type="entry name" value="GST_CTER"/>
    <property type="match status" value="1"/>
</dbReference>
<dbReference type="PROSITE" id="PS50404">
    <property type="entry name" value="GST_NTER"/>
    <property type="match status" value="1"/>
</dbReference>